<gene>
    <name evidence="5" type="primary">STLP2</name>
    <name evidence="6" type="ORF">OsI_37484</name>
</gene>
<feature type="chain" id="PRO_0000434315" description="Sialyltransferase-like protein 2">
    <location>
        <begin position="1"/>
        <end position="396"/>
    </location>
</feature>
<feature type="topological domain" description="Cytoplasmic" evidence="5">
    <location>
        <begin position="1"/>
        <end position="6"/>
    </location>
</feature>
<feature type="transmembrane region" description="Helical; Signal-anchor for type II membrane protein" evidence="3">
    <location>
        <begin position="7"/>
        <end position="23"/>
    </location>
</feature>
<feature type="topological domain" description="Lumenal" evidence="5">
    <location>
        <begin position="24"/>
        <end position="396"/>
    </location>
</feature>
<feature type="glycosylation site" description="N-linked (GlcNAc...) asparagine" evidence="4">
    <location>
        <position position="72"/>
    </location>
</feature>
<feature type="glycosylation site" description="N-linked (GlcNAc...) asparagine" evidence="4">
    <location>
        <position position="260"/>
    </location>
</feature>
<feature type="glycosylation site" description="N-linked (GlcNAc...) asparagine" evidence="4">
    <location>
        <position position="304"/>
    </location>
</feature>
<keyword id="KW-0325">Glycoprotein</keyword>
<keyword id="KW-0328">Glycosyltransferase</keyword>
<keyword id="KW-0333">Golgi apparatus</keyword>
<keyword id="KW-0472">Membrane</keyword>
<keyword id="KW-1185">Reference proteome</keyword>
<keyword id="KW-0735">Signal-anchor</keyword>
<keyword id="KW-0808">Transferase</keyword>
<keyword id="KW-0812">Transmembrane</keyword>
<keyword id="KW-1133">Transmembrane helix</keyword>
<proteinExistence type="inferred from homology"/>
<dbReference type="EC" id="2.4.-.-" evidence="5"/>
<dbReference type="EMBL" id="CM000137">
    <property type="protein sequence ID" value="EAY82275.1"/>
    <property type="molecule type" value="Genomic_DNA"/>
</dbReference>
<dbReference type="SMR" id="A2ZI41"/>
<dbReference type="STRING" id="39946.A2ZI41"/>
<dbReference type="GlyCosmos" id="A2ZI41">
    <property type="glycosylation" value="3 sites, No reported glycans"/>
</dbReference>
<dbReference type="EnsemblPlants" id="BGIOSGA036999-TA">
    <property type="protein sequence ID" value="BGIOSGA036999-PA"/>
    <property type="gene ID" value="BGIOSGA036999"/>
</dbReference>
<dbReference type="EnsemblPlants" id="OsGoSa_12g0003690.01">
    <property type="protein sequence ID" value="OsGoSa_12g0003690.01"/>
    <property type="gene ID" value="OsGoSa_12g0003690"/>
</dbReference>
<dbReference type="EnsemblPlants" id="OsIR64_12g0003680.01">
    <property type="protein sequence ID" value="OsIR64_12g0003680.01"/>
    <property type="gene ID" value="OsIR64_12g0003680"/>
</dbReference>
<dbReference type="EnsemblPlants" id="OsKYG_12g0003680.01">
    <property type="protein sequence ID" value="OsKYG_12g0003680.01"/>
    <property type="gene ID" value="OsKYG_12g0003680"/>
</dbReference>
<dbReference type="EnsemblPlants" id="OsLaMu_12g0003580.01">
    <property type="protein sequence ID" value="OsLaMu_12g0003580.01"/>
    <property type="gene ID" value="OsLaMu_12g0003580"/>
</dbReference>
<dbReference type="EnsemblPlants" id="OsLima_12g0003470.01">
    <property type="protein sequence ID" value="OsLima_12g0003470.01"/>
    <property type="gene ID" value="OsLima_12g0003470"/>
</dbReference>
<dbReference type="EnsemblPlants" id="OsLiXu_12g0003640.01">
    <property type="protein sequence ID" value="OsLiXu_12g0003640.01"/>
    <property type="gene ID" value="OsLiXu_12g0003640"/>
</dbReference>
<dbReference type="EnsemblPlants" id="OsMH63_12G003760_01">
    <property type="protein sequence ID" value="OsMH63_12G003760_01"/>
    <property type="gene ID" value="OsMH63_12G003760"/>
</dbReference>
<dbReference type="EnsemblPlants" id="OsPr106_12g0003690.01">
    <property type="protein sequence ID" value="OsPr106_12g0003690.01"/>
    <property type="gene ID" value="OsPr106_12g0003690"/>
</dbReference>
<dbReference type="EnsemblPlants" id="OsZS97_12G003660_01">
    <property type="protein sequence ID" value="OsZS97_12G003660_01"/>
    <property type="gene ID" value="OsZS97_12G003660"/>
</dbReference>
<dbReference type="Gramene" id="BGIOSGA036999-TA">
    <property type="protein sequence ID" value="BGIOSGA036999-PA"/>
    <property type="gene ID" value="BGIOSGA036999"/>
</dbReference>
<dbReference type="Gramene" id="OsGoSa_12g0003690.01">
    <property type="protein sequence ID" value="OsGoSa_12g0003690.01"/>
    <property type="gene ID" value="OsGoSa_12g0003690"/>
</dbReference>
<dbReference type="Gramene" id="OsIR64_12g0003680.01">
    <property type="protein sequence ID" value="OsIR64_12g0003680.01"/>
    <property type="gene ID" value="OsIR64_12g0003680"/>
</dbReference>
<dbReference type="Gramene" id="OsKYG_12g0003680.01">
    <property type="protein sequence ID" value="OsKYG_12g0003680.01"/>
    <property type="gene ID" value="OsKYG_12g0003680"/>
</dbReference>
<dbReference type="Gramene" id="OsLaMu_12g0003580.01">
    <property type="protein sequence ID" value="OsLaMu_12g0003580.01"/>
    <property type="gene ID" value="OsLaMu_12g0003580"/>
</dbReference>
<dbReference type="Gramene" id="OsLima_12g0003470.01">
    <property type="protein sequence ID" value="OsLima_12g0003470.01"/>
    <property type="gene ID" value="OsLima_12g0003470"/>
</dbReference>
<dbReference type="Gramene" id="OsLiXu_12g0003640.01">
    <property type="protein sequence ID" value="OsLiXu_12g0003640.01"/>
    <property type="gene ID" value="OsLiXu_12g0003640"/>
</dbReference>
<dbReference type="Gramene" id="OsMH63_12G003760_01">
    <property type="protein sequence ID" value="OsMH63_12G003760_01"/>
    <property type="gene ID" value="OsMH63_12G003760"/>
</dbReference>
<dbReference type="Gramene" id="OsPr106_12g0003690.01">
    <property type="protein sequence ID" value="OsPr106_12g0003690.01"/>
    <property type="gene ID" value="OsPr106_12g0003690"/>
</dbReference>
<dbReference type="Gramene" id="OsZS97_12G003660_01">
    <property type="protein sequence ID" value="OsZS97_12G003660_01"/>
    <property type="gene ID" value="OsZS97_12G003660"/>
</dbReference>
<dbReference type="HOGENOM" id="CLU_044787_0_0_1"/>
<dbReference type="OMA" id="HYCAVRS"/>
<dbReference type="OrthoDB" id="10264956at2759"/>
<dbReference type="Proteomes" id="UP000007015">
    <property type="component" value="Chromosome 12"/>
</dbReference>
<dbReference type="GO" id="GO:0000139">
    <property type="term" value="C:Golgi membrane"/>
    <property type="evidence" value="ECO:0007669"/>
    <property type="project" value="UniProtKB-SubCell"/>
</dbReference>
<dbReference type="GO" id="GO:0008373">
    <property type="term" value="F:sialyltransferase activity"/>
    <property type="evidence" value="ECO:0007669"/>
    <property type="project" value="InterPro"/>
</dbReference>
<dbReference type="GO" id="GO:0006486">
    <property type="term" value="P:protein glycosylation"/>
    <property type="evidence" value="ECO:0007669"/>
    <property type="project" value="InterPro"/>
</dbReference>
<dbReference type="CDD" id="cd19952">
    <property type="entry name" value="GT29"/>
    <property type="match status" value="1"/>
</dbReference>
<dbReference type="Gene3D" id="3.90.1480.20">
    <property type="entry name" value="Glycosyl transferase family 29"/>
    <property type="match status" value="1"/>
</dbReference>
<dbReference type="InterPro" id="IPR001675">
    <property type="entry name" value="Glyco_trans_29"/>
</dbReference>
<dbReference type="InterPro" id="IPR038578">
    <property type="entry name" value="GT29-like_sf"/>
</dbReference>
<dbReference type="PANTHER" id="PTHR46779">
    <property type="entry name" value="BETA-1,6-GALACTOSYLTRANSFERASE GALT29A"/>
    <property type="match status" value="1"/>
</dbReference>
<dbReference type="PANTHER" id="PTHR46779:SF2">
    <property type="entry name" value="SIALYLTRANSFERASE-LIKE PROTEIN 2"/>
    <property type="match status" value="1"/>
</dbReference>
<dbReference type="Pfam" id="PF00777">
    <property type="entry name" value="Glyco_transf_29"/>
    <property type="match status" value="1"/>
</dbReference>
<organism>
    <name type="scientific">Oryza sativa subsp. indica</name>
    <name type="common">Rice</name>
    <dbReference type="NCBI Taxonomy" id="39946"/>
    <lineage>
        <taxon>Eukaryota</taxon>
        <taxon>Viridiplantae</taxon>
        <taxon>Streptophyta</taxon>
        <taxon>Embryophyta</taxon>
        <taxon>Tracheophyta</taxon>
        <taxon>Spermatophyta</taxon>
        <taxon>Magnoliopsida</taxon>
        <taxon>Liliopsida</taxon>
        <taxon>Poales</taxon>
        <taxon>Poaceae</taxon>
        <taxon>BOP clade</taxon>
        <taxon>Oryzoideae</taxon>
        <taxon>Oryzeae</taxon>
        <taxon>Oryzinae</taxon>
        <taxon>Oryza</taxon>
        <taxon>Oryza sativa</taxon>
    </lineage>
</organism>
<accession>A2ZI41</accession>
<sequence>MKRRHLPPVLVLLLLSILSLSFRRRLLVLQGPPSSSSSSRHPVGDPLLRRLAADDGAGSSQILAEAAALFANASISTFPSLGNHHRLLYLRMPYAFSPRAPPRPKTVARLRVPVDALPPDGKLLASFRASLGSFLAARRRRGRGGNVAGVMRDLAGVLGRRYRTCAVVGNSGVLLGSGRGPQIDAHDLVIRLNNARVAGFAADVGVKTSLSFVNSNILHICAARNAITRAACGCHPYGGEVPMAMYVCQPAHLLDALICNATATPSSPFPLLVTDARLDALCARIAKYYSLRRFVSATGEPAANWTRRHDERYFHYSSGMQAVVMALGVCDEVSLFGFGKSPGAKHHYHTNQKKELDLHDYEAEYDFYGDLQARPAAVPFLDDAHGFTVPPVRLHR</sequence>
<protein>
    <recommendedName>
        <fullName evidence="5">Sialyltransferase-like protein 2</fullName>
        <ecNumber evidence="5">2.4.-.-</ecNumber>
    </recommendedName>
</protein>
<comment type="function">
    <text evidence="1">Does not possess sialyltransferase-like activity in vitro.</text>
</comment>
<comment type="subcellular location">
    <subcellularLocation>
        <location evidence="2">Golgi apparatus membrane</location>
        <topology evidence="5">Single-pass type II membrane protein</topology>
    </subcellularLocation>
</comment>
<comment type="similarity">
    <text evidence="5">Belongs to the glycosyltransferase 29 family.</text>
</comment>
<name>STLP2_ORYSI</name>
<evidence type="ECO:0000250" key="1">
    <source>
        <dbReference type="UniProtKB" id="Q2QXM3"/>
    </source>
</evidence>
<evidence type="ECO:0000250" key="2">
    <source>
        <dbReference type="UniProtKB" id="Q9SGD2"/>
    </source>
</evidence>
<evidence type="ECO:0000255" key="3"/>
<evidence type="ECO:0000255" key="4">
    <source>
        <dbReference type="PROSITE-ProRule" id="PRU00498"/>
    </source>
</evidence>
<evidence type="ECO:0000305" key="5"/>
<evidence type="ECO:0000312" key="6">
    <source>
        <dbReference type="EMBL" id="EAY82275.1"/>
    </source>
</evidence>
<reference key="1">
    <citation type="journal article" date="2005" name="PLoS Biol.">
        <title>The genomes of Oryza sativa: a history of duplications.</title>
        <authorList>
            <person name="Yu J."/>
            <person name="Wang J."/>
            <person name="Lin W."/>
            <person name="Li S."/>
            <person name="Li H."/>
            <person name="Zhou J."/>
            <person name="Ni P."/>
            <person name="Dong W."/>
            <person name="Hu S."/>
            <person name="Zeng C."/>
            <person name="Zhang J."/>
            <person name="Zhang Y."/>
            <person name="Li R."/>
            <person name="Xu Z."/>
            <person name="Li S."/>
            <person name="Li X."/>
            <person name="Zheng H."/>
            <person name="Cong L."/>
            <person name="Lin L."/>
            <person name="Yin J."/>
            <person name="Geng J."/>
            <person name="Li G."/>
            <person name="Shi J."/>
            <person name="Liu J."/>
            <person name="Lv H."/>
            <person name="Li J."/>
            <person name="Wang J."/>
            <person name="Deng Y."/>
            <person name="Ran L."/>
            <person name="Shi X."/>
            <person name="Wang X."/>
            <person name="Wu Q."/>
            <person name="Li C."/>
            <person name="Ren X."/>
            <person name="Wang J."/>
            <person name="Wang X."/>
            <person name="Li D."/>
            <person name="Liu D."/>
            <person name="Zhang X."/>
            <person name="Ji Z."/>
            <person name="Zhao W."/>
            <person name="Sun Y."/>
            <person name="Zhang Z."/>
            <person name="Bao J."/>
            <person name="Han Y."/>
            <person name="Dong L."/>
            <person name="Ji J."/>
            <person name="Chen P."/>
            <person name="Wu S."/>
            <person name="Liu J."/>
            <person name="Xiao Y."/>
            <person name="Bu D."/>
            <person name="Tan J."/>
            <person name="Yang L."/>
            <person name="Ye C."/>
            <person name="Zhang J."/>
            <person name="Xu J."/>
            <person name="Zhou Y."/>
            <person name="Yu Y."/>
            <person name="Zhang B."/>
            <person name="Zhuang S."/>
            <person name="Wei H."/>
            <person name="Liu B."/>
            <person name="Lei M."/>
            <person name="Yu H."/>
            <person name="Li Y."/>
            <person name="Xu H."/>
            <person name="Wei S."/>
            <person name="He X."/>
            <person name="Fang L."/>
            <person name="Zhang Z."/>
            <person name="Zhang Y."/>
            <person name="Huang X."/>
            <person name="Su Z."/>
            <person name="Tong W."/>
            <person name="Li J."/>
            <person name="Tong Z."/>
            <person name="Li S."/>
            <person name="Ye J."/>
            <person name="Wang L."/>
            <person name="Fang L."/>
            <person name="Lei T."/>
            <person name="Chen C.-S."/>
            <person name="Chen H.-C."/>
            <person name="Xu Z."/>
            <person name="Li H."/>
            <person name="Huang H."/>
            <person name="Zhang F."/>
            <person name="Xu H."/>
            <person name="Li N."/>
            <person name="Zhao C."/>
            <person name="Li S."/>
            <person name="Dong L."/>
            <person name="Huang Y."/>
            <person name="Li L."/>
            <person name="Xi Y."/>
            <person name="Qi Q."/>
            <person name="Li W."/>
            <person name="Zhang B."/>
            <person name="Hu W."/>
            <person name="Zhang Y."/>
            <person name="Tian X."/>
            <person name="Jiao Y."/>
            <person name="Liang X."/>
            <person name="Jin J."/>
            <person name="Gao L."/>
            <person name="Zheng W."/>
            <person name="Hao B."/>
            <person name="Liu S.-M."/>
            <person name="Wang W."/>
            <person name="Yuan L."/>
            <person name="Cao M."/>
            <person name="McDermott J."/>
            <person name="Samudrala R."/>
            <person name="Wang J."/>
            <person name="Wong G.K.-S."/>
            <person name="Yang H."/>
        </authorList>
    </citation>
    <scope>NUCLEOTIDE SEQUENCE [LARGE SCALE GENOMIC DNA]</scope>
    <source>
        <strain>cv. 93-11</strain>
    </source>
</reference>